<keyword id="KW-0964">Secreted</keyword>
<keyword id="KW-0732">Signal</keyword>
<sequence length="75" mass="8498">MVSKSLIVLLLVSVLVSTFYTSEAYPASFDDDFDALDDLDDLDLDDLLDLEPADLVLLDMWANMLDSQDFEDDFE</sequence>
<protein>
    <recommendedName>
        <fullName>Anionic peptide</fullName>
        <shortName>AP</shortName>
    </recommendedName>
</protein>
<proteinExistence type="inferred from homology"/>
<reference key="1">
    <citation type="journal article" date="2009" name="Biochimie">
        <title>Molecular cloning and nucleotide sequence analysis of genes from a cDNA library of the scorpion Tityus discrepans.</title>
        <authorList>
            <person name="D'Suze G."/>
            <person name="Schwartz E.F."/>
            <person name="Garcia-Gomez B.I."/>
            <person name="Sevcik C."/>
            <person name="Possani L.D."/>
        </authorList>
    </citation>
    <scope>NUCLEOTIDE SEQUENCE [MRNA]</scope>
    <source>
        <tissue>Venom gland</tissue>
    </source>
</reference>
<feature type="signal peptide" evidence="2">
    <location>
        <begin position="1"/>
        <end position="24"/>
    </location>
</feature>
<feature type="chain" id="PRO_5000525358" description="Anionic peptide">
    <location>
        <begin position="25"/>
        <end position="75"/>
    </location>
</feature>
<name>NDBX_TITDI</name>
<dbReference type="EMBL" id="FN392269">
    <property type="protein sequence ID" value="CAY61910.1"/>
    <property type="molecule type" value="mRNA"/>
</dbReference>
<dbReference type="GO" id="GO:0005576">
    <property type="term" value="C:extracellular region"/>
    <property type="evidence" value="ECO:0007669"/>
    <property type="project" value="UniProtKB-SubCell"/>
</dbReference>
<accession>C9X4J1</accession>
<comment type="subcellular location">
    <subcellularLocation>
        <location evidence="1">Secreted</location>
    </subcellularLocation>
</comment>
<comment type="tissue specificity">
    <text evidence="3">Expressed by the venom gland.</text>
</comment>
<comment type="similarity">
    <text evidence="3">Belongs to the non-disulfide-bridged peptide (NDBP) superfamily.</text>
</comment>
<organism>
    <name type="scientific">Tityus discrepans</name>
    <name type="common">Venezuelan scorpion</name>
    <dbReference type="NCBI Taxonomy" id="57059"/>
    <lineage>
        <taxon>Eukaryota</taxon>
        <taxon>Metazoa</taxon>
        <taxon>Ecdysozoa</taxon>
        <taxon>Arthropoda</taxon>
        <taxon>Chelicerata</taxon>
        <taxon>Arachnida</taxon>
        <taxon>Scorpiones</taxon>
        <taxon>Buthida</taxon>
        <taxon>Buthoidea</taxon>
        <taxon>Buthidae</taxon>
        <taxon>Tityus</taxon>
    </lineage>
</organism>
<evidence type="ECO:0000250" key="1"/>
<evidence type="ECO:0000255" key="2"/>
<evidence type="ECO:0000305" key="3"/>